<name>RL3_ECOLU</name>
<comment type="function">
    <text evidence="1">One of the primary rRNA binding proteins, it binds directly near the 3'-end of the 23S rRNA, where it nucleates assembly of the 50S subunit.</text>
</comment>
<comment type="subunit">
    <text evidence="1">Part of the 50S ribosomal subunit. Forms a cluster with proteins L14 and L19.</text>
</comment>
<comment type="PTM">
    <text evidence="1">Methylated by PrmB.</text>
</comment>
<comment type="similarity">
    <text evidence="1">Belongs to the universal ribosomal protein uL3 family.</text>
</comment>
<proteinExistence type="inferred from homology"/>
<keyword id="KW-0488">Methylation</keyword>
<keyword id="KW-0687">Ribonucleoprotein</keyword>
<keyword id="KW-0689">Ribosomal protein</keyword>
<keyword id="KW-0694">RNA-binding</keyword>
<keyword id="KW-0699">rRNA-binding</keyword>
<accession>B7NDU1</accession>
<organism>
    <name type="scientific">Escherichia coli O17:K52:H18 (strain UMN026 / ExPEC)</name>
    <dbReference type="NCBI Taxonomy" id="585056"/>
    <lineage>
        <taxon>Bacteria</taxon>
        <taxon>Pseudomonadati</taxon>
        <taxon>Pseudomonadota</taxon>
        <taxon>Gammaproteobacteria</taxon>
        <taxon>Enterobacterales</taxon>
        <taxon>Enterobacteriaceae</taxon>
        <taxon>Escherichia</taxon>
    </lineage>
</organism>
<protein>
    <recommendedName>
        <fullName evidence="1">Large ribosomal subunit protein uL3</fullName>
    </recommendedName>
    <alternativeName>
        <fullName evidence="2">50S ribosomal protein L3</fullName>
    </alternativeName>
</protein>
<evidence type="ECO:0000255" key="1">
    <source>
        <dbReference type="HAMAP-Rule" id="MF_01325"/>
    </source>
</evidence>
<evidence type="ECO:0000305" key="2"/>
<sequence>MIGLVGKKVGMTRIFTEDGVSIPVTVIEVEANRVTQVKDLANDGYRAIQVTTGAKKANRVTKPEAGHFAKAGVEAGRGLWEFRLAEGEEFTVGQSISVELFADVKKVDVTGTSKGKGFAGTVKRWNFRTQDATHGNSLSHRVPGSIGQNQTPGKVFKGKKMAGQMGNERVTVQSLDVVRVDAERNLLLVKGAVPGATGSDLIVKPAVKA</sequence>
<dbReference type="EMBL" id="CU928163">
    <property type="protein sequence ID" value="CAR14941.1"/>
    <property type="molecule type" value="Genomic_DNA"/>
</dbReference>
<dbReference type="RefSeq" id="WP_000579833.1">
    <property type="nucleotide sequence ID" value="NC_011751.1"/>
</dbReference>
<dbReference type="RefSeq" id="YP_002414446.1">
    <property type="nucleotide sequence ID" value="NC_011751.1"/>
</dbReference>
<dbReference type="SMR" id="B7NDU1"/>
<dbReference type="STRING" id="585056.ECUMN_3793"/>
<dbReference type="GeneID" id="86948184"/>
<dbReference type="KEGG" id="eum:ECUMN_3793"/>
<dbReference type="PATRIC" id="fig|585056.7.peg.3968"/>
<dbReference type="HOGENOM" id="CLU_044142_4_1_6"/>
<dbReference type="Proteomes" id="UP000007097">
    <property type="component" value="Chromosome"/>
</dbReference>
<dbReference type="GO" id="GO:0022625">
    <property type="term" value="C:cytosolic large ribosomal subunit"/>
    <property type="evidence" value="ECO:0007669"/>
    <property type="project" value="TreeGrafter"/>
</dbReference>
<dbReference type="GO" id="GO:0019843">
    <property type="term" value="F:rRNA binding"/>
    <property type="evidence" value="ECO:0007669"/>
    <property type="project" value="UniProtKB-UniRule"/>
</dbReference>
<dbReference type="GO" id="GO:0003735">
    <property type="term" value="F:structural constituent of ribosome"/>
    <property type="evidence" value="ECO:0007669"/>
    <property type="project" value="InterPro"/>
</dbReference>
<dbReference type="GO" id="GO:0006412">
    <property type="term" value="P:translation"/>
    <property type="evidence" value="ECO:0007669"/>
    <property type="project" value="UniProtKB-UniRule"/>
</dbReference>
<dbReference type="FunFam" id="2.40.30.10:FF:000004">
    <property type="entry name" value="50S ribosomal protein L3"/>
    <property type="match status" value="1"/>
</dbReference>
<dbReference type="FunFam" id="3.30.160.810:FF:000001">
    <property type="entry name" value="50S ribosomal protein L3"/>
    <property type="match status" value="1"/>
</dbReference>
<dbReference type="Gene3D" id="3.30.160.810">
    <property type="match status" value="1"/>
</dbReference>
<dbReference type="Gene3D" id="2.40.30.10">
    <property type="entry name" value="Translation factors"/>
    <property type="match status" value="1"/>
</dbReference>
<dbReference type="HAMAP" id="MF_01325_B">
    <property type="entry name" value="Ribosomal_uL3_B"/>
    <property type="match status" value="1"/>
</dbReference>
<dbReference type="InterPro" id="IPR000597">
    <property type="entry name" value="Ribosomal_uL3"/>
</dbReference>
<dbReference type="InterPro" id="IPR019927">
    <property type="entry name" value="Ribosomal_uL3_bac/org-type"/>
</dbReference>
<dbReference type="InterPro" id="IPR019926">
    <property type="entry name" value="Ribosomal_uL3_CS"/>
</dbReference>
<dbReference type="InterPro" id="IPR009000">
    <property type="entry name" value="Transl_B-barrel_sf"/>
</dbReference>
<dbReference type="NCBIfam" id="TIGR03625">
    <property type="entry name" value="L3_bact"/>
    <property type="match status" value="1"/>
</dbReference>
<dbReference type="PANTHER" id="PTHR11229">
    <property type="entry name" value="50S RIBOSOMAL PROTEIN L3"/>
    <property type="match status" value="1"/>
</dbReference>
<dbReference type="PANTHER" id="PTHR11229:SF16">
    <property type="entry name" value="LARGE RIBOSOMAL SUBUNIT PROTEIN UL3C"/>
    <property type="match status" value="1"/>
</dbReference>
<dbReference type="Pfam" id="PF00297">
    <property type="entry name" value="Ribosomal_L3"/>
    <property type="match status" value="1"/>
</dbReference>
<dbReference type="SUPFAM" id="SSF50447">
    <property type="entry name" value="Translation proteins"/>
    <property type="match status" value="1"/>
</dbReference>
<dbReference type="PROSITE" id="PS00474">
    <property type="entry name" value="RIBOSOMAL_L3"/>
    <property type="match status" value="1"/>
</dbReference>
<feature type="chain" id="PRO_1000141864" description="Large ribosomal subunit protein uL3">
    <location>
        <begin position="1"/>
        <end position="209"/>
    </location>
</feature>
<feature type="modified residue" description="N5-methylglutamine" evidence="1">
    <location>
        <position position="150"/>
    </location>
</feature>
<reference key="1">
    <citation type="journal article" date="2009" name="PLoS Genet.">
        <title>Organised genome dynamics in the Escherichia coli species results in highly diverse adaptive paths.</title>
        <authorList>
            <person name="Touchon M."/>
            <person name="Hoede C."/>
            <person name="Tenaillon O."/>
            <person name="Barbe V."/>
            <person name="Baeriswyl S."/>
            <person name="Bidet P."/>
            <person name="Bingen E."/>
            <person name="Bonacorsi S."/>
            <person name="Bouchier C."/>
            <person name="Bouvet O."/>
            <person name="Calteau A."/>
            <person name="Chiapello H."/>
            <person name="Clermont O."/>
            <person name="Cruveiller S."/>
            <person name="Danchin A."/>
            <person name="Diard M."/>
            <person name="Dossat C."/>
            <person name="Karoui M.E."/>
            <person name="Frapy E."/>
            <person name="Garry L."/>
            <person name="Ghigo J.M."/>
            <person name="Gilles A.M."/>
            <person name="Johnson J."/>
            <person name="Le Bouguenec C."/>
            <person name="Lescat M."/>
            <person name="Mangenot S."/>
            <person name="Martinez-Jehanne V."/>
            <person name="Matic I."/>
            <person name="Nassif X."/>
            <person name="Oztas S."/>
            <person name="Petit M.A."/>
            <person name="Pichon C."/>
            <person name="Rouy Z."/>
            <person name="Ruf C.S."/>
            <person name="Schneider D."/>
            <person name="Tourret J."/>
            <person name="Vacherie B."/>
            <person name="Vallenet D."/>
            <person name="Medigue C."/>
            <person name="Rocha E.P.C."/>
            <person name="Denamur E."/>
        </authorList>
    </citation>
    <scope>NUCLEOTIDE SEQUENCE [LARGE SCALE GENOMIC DNA]</scope>
    <source>
        <strain>UMN026 / ExPEC</strain>
    </source>
</reference>
<gene>
    <name evidence="1" type="primary">rplC</name>
    <name type="ordered locus">ECUMN_3793</name>
</gene>